<name>NUOC_CUPMC</name>
<reference key="1">
    <citation type="journal article" date="2010" name="PLoS ONE">
        <title>The complete genome sequence of Cupriavidus metallidurans strain CH34, a master survivalist in harsh and anthropogenic environments.</title>
        <authorList>
            <person name="Janssen P.J."/>
            <person name="Van Houdt R."/>
            <person name="Moors H."/>
            <person name="Monsieurs P."/>
            <person name="Morin N."/>
            <person name="Michaux A."/>
            <person name="Benotmane M.A."/>
            <person name="Leys N."/>
            <person name="Vallaeys T."/>
            <person name="Lapidus A."/>
            <person name="Monchy S."/>
            <person name="Medigue C."/>
            <person name="Taghavi S."/>
            <person name="McCorkle S."/>
            <person name="Dunn J."/>
            <person name="van der Lelie D."/>
            <person name="Mergeay M."/>
        </authorList>
    </citation>
    <scope>NUCLEOTIDE SEQUENCE [LARGE SCALE GENOMIC DNA]</scope>
    <source>
        <strain>ATCC 43123 / DSM 2839 / NBRC 102507 / CH34</strain>
    </source>
</reference>
<comment type="function">
    <text evidence="1">NDH-1 shuttles electrons from NADH, via FMN and iron-sulfur (Fe-S) centers, to quinones in the respiratory chain. The immediate electron acceptor for the enzyme in this species is believed to be ubiquinone. Couples the redox reaction to proton translocation (for every two electrons transferred, four hydrogen ions are translocated across the cytoplasmic membrane), and thus conserves the redox energy in a proton gradient.</text>
</comment>
<comment type="catalytic activity">
    <reaction evidence="1">
        <text>a quinone + NADH + 5 H(+)(in) = a quinol + NAD(+) + 4 H(+)(out)</text>
        <dbReference type="Rhea" id="RHEA:57888"/>
        <dbReference type="ChEBI" id="CHEBI:15378"/>
        <dbReference type="ChEBI" id="CHEBI:24646"/>
        <dbReference type="ChEBI" id="CHEBI:57540"/>
        <dbReference type="ChEBI" id="CHEBI:57945"/>
        <dbReference type="ChEBI" id="CHEBI:132124"/>
    </reaction>
</comment>
<comment type="subunit">
    <text evidence="1">NDH-1 is composed of 14 different subunits. Subunits NuoB, C, D, E, F, and G constitute the peripheral sector of the complex.</text>
</comment>
<comment type="subcellular location">
    <subcellularLocation>
        <location evidence="1">Cell inner membrane</location>
        <topology evidence="1">Peripheral membrane protein</topology>
        <orientation evidence="1">Cytoplasmic side</orientation>
    </subcellularLocation>
</comment>
<comment type="similarity">
    <text evidence="1">Belongs to the complex I 30 kDa subunit family.</text>
</comment>
<organism>
    <name type="scientific">Cupriavidus metallidurans (strain ATCC 43123 / DSM 2839 / NBRC 102507 / CH34)</name>
    <name type="common">Ralstonia metallidurans</name>
    <dbReference type="NCBI Taxonomy" id="266264"/>
    <lineage>
        <taxon>Bacteria</taxon>
        <taxon>Pseudomonadati</taxon>
        <taxon>Pseudomonadota</taxon>
        <taxon>Betaproteobacteria</taxon>
        <taxon>Burkholderiales</taxon>
        <taxon>Burkholderiaceae</taxon>
        <taxon>Cupriavidus</taxon>
    </lineage>
</organism>
<protein>
    <recommendedName>
        <fullName evidence="1">NADH-quinone oxidoreductase subunit C</fullName>
        <ecNumber evidence="1">7.1.1.-</ecNumber>
    </recommendedName>
    <alternativeName>
        <fullName evidence="1">NADH dehydrogenase I subunit C</fullName>
    </alternativeName>
    <alternativeName>
        <fullName evidence="1">NDH-1 subunit C</fullName>
    </alternativeName>
</protein>
<keyword id="KW-0997">Cell inner membrane</keyword>
<keyword id="KW-1003">Cell membrane</keyword>
<keyword id="KW-0472">Membrane</keyword>
<keyword id="KW-0520">NAD</keyword>
<keyword id="KW-0874">Quinone</keyword>
<keyword id="KW-1185">Reference proteome</keyword>
<keyword id="KW-1278">Translocase</keyword>
<keyword id="KW-0813">Transport</keyword>
<keyword id="KW-0830">Ubiquinone</keyword>
<sequence length="199" mass="23007">MANLDTLKAALEKVLGKRVQNLIEATGELTLIVKAADYLEVARLLRDDPSLRFEQLLDLCGVDYSDYAEGAWDGLRFAAVSQLLSVTHNWRLRLRVFAPDDDFPVLPSVINVWNSVNWFEREAFDFYGIVFEGHPDLRRILTDYGFVGHPFRKDFPVSGYVEMRYDPEQKRVIYQPVTIEPREVTPRVIREENYGGTQH</sequence>
<feature type="chain" id="PRO_0000358175" description="NADH-quinone oxidoreductase subunit C">
    <location>
        <begin position="1"/>
        <end position="199"/>
    </location>
</feature>
<evidence type="ECO:0000255" key="1">
    <source>
        <dbReference type="HAMAP-Rule" id="MF_01357"/>
    </source>
</evidence>
<accession>Q1LPW1</accession>
<dbReference type="EC" id="7.1.1.-" evidence="1"/>
<dbReference type="EMBL" id="CP000352">
    <property type="protein sequence ID" value="ABF07815.1"/>
    <property type="molecule type" value="Genomic_DNA"/>
</dbReference>
<dbReference type="RefSeq" id="WP_008643343.1">
    <property type="nucleotide sequence ID" value="NC_007973.1"/>
</dbReference>
<dbReference type="SMR" id="Q1LPW1"/>
<dbReference type="STRING" id="266264.Rmet_0929"/>
<dbReference type="KEGG" id="rme:Rmet_0929"/>
<dbReference type="eggNOG" id="COG0852">
    <property type="taxonomic scope" value="Bacteria"/>
</dbReference>
<dbReference type="HOGENOM" id="CLU_042628_2_1_4"/>
<dbReference type="Proteomes" id="UP000002429">
    <property type="component" value="Chromosome"/>
</dbReference>
<dbReference type="GO" id="GO:0005886">
    <property type="term" value="C:plasma membrane"/>
    <property type="evidence" value="ECO:0007669"/>
    <property type="project" value="UniProtKB-SubCell"/>
</dbReference>
<dbReference type="GO" id="GO:0008137">
    <property type="term" value="F:NADH dehydrogenase (ubiquinone) activity"/>
    <property type="evidence" value="ECO:0007669"/>
    <property type="project" value="InterPro"/>
</dbReference>
<dbReference type="GO" id="GO:0050136">
    <property type="term" value="F:NADH:ubiquinone reductase (non-electrogenic) activity"/>
    <property type="evidence" value="ECO:0007669"/>
    <property type="project" value="UniProtKB-UniRule"/>
</dbReference>
<dbReference type="GO" id="GO:0048038">
    <property type="term" value="F:quinone binding"/>
    <property type="evidence" value="ECO:0007669"/>
    <property type="project" value="UniProtKB-KW"/>
</dbReference>
<dbReference type="Gene3D" id="3.30.460.80">
    <property type="entry name" value="NADH:ubiquinone oxidoreductase, 30kDa subunit"/>
    <property type="match status" value="1"/>
</dbReference>
<dbReference type="HAMAP" id="MF_01357">
    <property type="entry name" value="NDH1_NuoC"/>
    <property type="match status" value="1"/>
</dbReference>
<dbReference type="InterPro" id="IPR010218">
    <property type="entry name" value="NADH_DH_suC"/>
</dbReference>
<dbReference type="InterPro" id="IPR037232">
    <property type="entry name" value="NADH_quin_OxRdtase_su_C/D-like"/>
</dbReference>
<dbReference type="InterPro" id="IPR001268">
    <property type="entry name" value="NADH_UbQ_OxRdtase_30kDa_su"/>
</dbReference>
<dbReference type="InterPro" id="IPR020396">
    <property type="entry name" value="NADH_UbQ_OxRdtase_CS"/>
</dbReference>
<dbReference type="NCBIfam" id="TIGR01961">
    <property type="entry name" value="NuoC_fam"/>
    <property type="match status" value="1"/>
</dbReference>
<dbReference type="NCBIfam" id="NF004730">
    <property type="entry name" value="PRK06074.1-1"/>
    <property type="match status" value="1"/>
</dbReference>
<dbReference type="PANTHER" id="PTHR10884:SF14">
    <property type="entry name" value="NADH DEHYDROGENASE [UBIQUINONE] IRON-SULFUR PROTEIN 3, MITOCHONDRIAL"/>
    <property type="match status" value="1"/>
</dbReference>
<dbReference type="PANTHER" id="PTHR10884">
    <property type="entry name" value="NADH DEHYDROGENASE UBIQUINONE IRON-SULFUR PROTEIN 3"/>
    <property type="match status" value="1"/>
</dbReference>
<dbReference type="Pfam" id="PF00329">
    <property type="entry name" value="Complex1_30kDa"/>
    <property type="match status" value="1"/>
</dbReference>
<dbReference type="SUPFAM" id="SSF143243">
    <property type="entry name" value="Nqo5-like"/>
    <property type="match status" value="1"/>
</dbReference>
<dbReference type="PROSITE" id="PS00542">
    <property type="entry name" value="COMPLEX1_30K"/>
    <property type="match status" value="1"/>
</dbReference>
<gene>
    <name evidence="1" type="primary">nuoC</name>
    <name type="ordered locus">Rmet_0929</name>
</gene>
<proteinExistence type="inferred from homology"/>